<organism>
    <name type="scientific">Gemmatimonas aurantiaca (strain DSM 14586 / JCM 11422 / NBRC 100505 / T-27)</name>
    <dbReference type="NCBI Taxonomy" id="379066"/>
    <lineage>
        <taxon>Bacteria</taxon>
        <taxon>Pseudomonadati</taxon>
        <taxon>Gemmatimonadota</taxon>
        <taxon>Gemmatimonadia</taxon>
        <taxon>Gemmatimonadales</taxon>
        <taxon>Gemmatimonadaceae</taxon>
        <taxon>Gemmatimonas</taxon>
    </lineage>
</organism>
<sequence length="607" mass="65248">MSRIAILPSAVADQIAAGEVVERPASVVKELVENALDAGATSVDITIEDGGRTLIRIADNGSGMDGADAVLALSRHATSKITSAEQLVGVRSFGFRGEALPAIASVSELQIETASEDGSGTLVRVQAGTLTETGQVARRQGTTVSVHRLFHNTPARLKFMRSARSEWRAIVDAMQAIGVLRRDVHFTVRHDGRVALDWPAVSTLRARLAALWGAADVERFVDVDDVQGVVHVSGLAERPADVGTATRRVLLIVNGRVVRDHGLIRAAEAAYRSTIPAGMRPSLVLQVHVPGGDVDVNVHPAKAEVRFRDRWPLERAVEEAVRRALGLFDASAGIGWRTWSAAPASREPGHALGGIPLEPSALRAAPAPEGLFATPAAADANLAQHAIATATAPTADDLTSAMQVDAMRAEAAREMETLVVPPLMQLRKTYLMFEHDEGVVLIDQHSAHERVLYEQFLGVLERGEAPSQRLLFPLTLHLGPQEADAFEAHRDAFVRLGFEIDHFGGTSLLVQAVPMPHPRFDAERCLRDTLAALIGDRGASAAAKHERLAATFACKAAIKAGDQMSPGEMQALYRALAATVLPAHDVHGRSTIVRLSWDELDRRFGRK</sequence>
<name>MUTL_GEMAT</name>
<gene>
    <name evidence="1" type="primary">mutL</name>
    <name type="ordered locus">GAU_1530</name>
</gene>
<reference key="1">
    <citation type="submission" date="2006-03" db="EMBL/GenBank/DDBJ databases">
        <title>Complete genome sequence of Gemmatimonas aurantiaca T-27 that represents a novel phylum Gemmatimonadetes.</title>
        <authorList>
            <person name="Takasaki K."/>
            <person name="Ichikawa N."/>
            <person name="Miura H."/>
            <person name="Matsushita S."/>
            <person name="Watanabe Y."/>
            <person name="Oguchi A."/>
            <person name="Ankai A."/>
            <person name="Yashiro I."/>
            <person name="Takahashi M."/>
            <person name="Terui Y."/>
            <person name="Fukui S."/>
            <person name="Yokoyama H."/>
            <person name="Tanikawa S."/>
            <person name="Hanada S."/>
            <person name="Kamagata Y."/>
            <person name="Fujita N."/>
        </authorList>
    </citation>
    <scope>NUCLEOTIDE SEQUENCE [LARGE SCALE GENOMIC DNA]</scope>
    <source>
        <strain>DSM 14586 / JCM 11422 / NBRC 100505 / T-27</strain>
    </source>
</reference>
<dbReference type="EMBL" id="AP009153">
    <property type="protein sequence ID" value="BAH38572.1"/>
    <property type="molecule type" value="Genomic_DNA"/>
</dbReference>
<dbReference type="RefSeq" id="WP_012683019.1">
    <property type="nucleotide sequence ID" value="NC_012489.1"/>
</dbReference>
<dbReference type="SMR" id="C1A8L2"/>
<dbReference type="STRING" id="379066.GAU_1530"/>
<dbReference type="KEGG" id="gau:GAU_1530"/>
<dbReference type="eggNOG" id="COG0323">
    <property type="taxonomic scope" value="Bacteria"/>
</dbReference>
<dbReference type="HOGENOM" id="CLU_004131_4_2_0"/>
<dbReference type="Proteomes" id="UP000002209">
    <property type="component" value="Chromosome"/>
</dbReference>
<dbReference type="GO" id="GO:0032300">
    <property type="term" value="C:mismatch repair complex"/>
    <property type="evidence" value="ECO:0007669"/>
    <property type="project" value="InterPro"/>
</dbReference>
<dbReference type="GO" id="GO:0005524">
    <property type="term" value="F:ATP binding"/>
    <property type="evidence" value="ECO:0007669"/>
    <property type="project" value="InterPro"/>
</dbReference>
<dbReference type="GO" id="GO:0016887">
    <property type="term" value="F:ATP hydrolysis activity"/>
    <property type="evidence" value="ECO:0007669"/>
    <property type="project" value="InterPro"/>
</dbReference>
<dbReference type="GO" id="GO:0140664">
    <property type="term" value="F:ATP-dependent DNA damage sensor activity"/>
    <property type="evidence" value="ECO:0007669"/>
    <property type="project" value="InterPro"/>
</dbReference>
<dbReference type="GO" id="GO:0030983">
    <property type="term" value="F:mismatched DNA binding"/>
    <property type="evidence" value="ECO:0007669"/>
    <property type="project" value="InterPro"/>
</dbReference>
<dbReference type="GO" id="GO:0006298">
    <property type="term" value="P:mismatch repair"/>
    <property type="evidence" value="ECO:0007669"/>
    <property type="project" value="UniProtKB-UniRule"/>
</dbReference>
<dbReference type="CDD" id="cd16926">
    <property type="entry name" value="HATPase_MutL-MLH-PMS-like"/>
    <property type="match status" value="1"/>
</dbReference>
<dbReference type="CDD" id="cd00782">
    <property type="entry name" value="MutL_Trans"/>
    <property type="match status" value="1"/>
</dbReference>
<dbReference type="FunFam" id="3.30.565.10:FF:000003">
    <property type="entry name" value="DNA mismatch repair endonuclease MutL"/>
    <property type="match status" value="1"/>
</dbReference>
<dbReference type="Gene3D" id="3.30.230.10">
    <property type="match status" value="1"/>
</dbReference>
<dbReference type="Gene3D" id="3.30.565.10">
    <property type="entry name" value="Histidine kinase-like ATPase, C-terminal domain"/>
    <property type="match status" value="1"/>
</dbReference>
<dbReference type="Gene3D" id="3.30.1540.20">
    <property type="entry name" value="MutL, C-terminal domain, dimerisation subdomain"/>
    <property type="match status" value="1"/>
</dbReference>
<dbReference type="Gene3D" id="3.30.1370.100">
    <property type="entry name" value="MutL, C-terminal domain, regulatory subdomain"/>
    <property type="match status" value="1"/>
</dbReference>
<dbReference type="HAMAP" id="MF_00149">
    <property type="entry name" value="DNA_mis_repair"/>
    <property type="match status" value="1"/>
</dbReference>
<dbReference type="InterPro" id="IPR014762">
    <property type="entry name" value="DNA_mismatch_repair_CS"/>
</dbReference>
<dbReference type="InterPro" id="IPR020667">
    <property type="entry name" value="DNA_mismatch_repair_MutL"/>
</dbReference>
<dbReference type="InterPro" id="IPR013507">
    <property type="entry name" value="DNA_mismatch_S5_2-like"/>
</dbReference>
<dbReference type="InterPro" id="IPR036890">
    <property type="entry name" value="HATPase_C_sf"/>
</dbReference>
<dbReference type="InterPro" id="IPR002099">
    <property type="entry name" value="MutL/Mlh/PMS"/>
</dbReference>
<dbReference type="InterPro" id="IPR038973">
    <property type="entry name" value="MutL/Mlh/Pms-like"/>
</dbReference>
<dbReference type="InterPro" id="IPR014790">
    <property type="entry name" value="MutL_C"/>
</dbReference>
<dbReference type="InterPro" id="IPR042120">
    <property type="entry name" value="MutL_C_dimsub"/>
</dbReference>
<dbReference type="InterPro" id="IPR042121">
    <property type="entry name" value="MutL_C_regsub"/>
</dbReference>
<dbReference type="InterPro" id="IPR037198">
    <property type="entry name" value="MutL_C_sf"/>
</dbReference>
<dbReference type="InterPro" id="IPR020568">
    <property type="entry name" value="Ribosomal_Su5_D2-typ_SF"/>
</dbReference>
<dbReference type="InterPro" id="IPR014721">
    <property type="entry name" value="Ribsml_uS5_D2-typ_fold_subgr"/>
</dbReference>
<dbReference type="NCBIfam" id="TIGR00585">
    <property type="entry name" value="mutl"/>
    <property type="match status" value="1"/>
</dbReference>
<dbReference type="PANTHER" id="PTHR10073">
    <property type="entry name" value="DNA MISMATCH REPAIR PROTEIN MLH, PMS, MUTL"/>
    <property type="match status" value="1"/>
</dbReference>
<dbReference type="PANTHER" id="PTHR10073:SF12">
    <property type="entry name" value="DNA MISMATCH REPAIR PROTEIN MLH1"/>
    <property type="match status" value="1"/>
</dbReference>
<dbReference type="Pfam" id="PF01119">
    <property type="entry name" value="DNA_mis_repair"/>
    <property type="match status" value="1"/>
</dbReference>
<dbReference type="Pfam" id="PF13589">
    <property type="entry name" value="HATPase_c_3"/>
    <property type="match status" value="1"/>
</dbReference>
<dbReference type="Pfam" id="PF08676">
    <property type="entry name" value="MutL_C"/>
    <property type="match status" value="1"/>
</dbReference>
<dbReference type="SMART" id="SM01340">
    <property type="entry name" value="DNA_mis_repair"/>
    <property type="match status" value="1"/>
</dbReference>
<dbReference type="SMART" id="SM00853">
    <property type="entry name" value="MutL_C"/>
    <property type="match status" value="1"/>
</dbReference>
<dbReference type="SUPFAM" id="SSF55874">
    <property type="entry name" value="ATPase domain of HSP90 chaperone/DNA topoisomerase II/histidine kinase"/>
    <property type="match status" value="1"/>
</dbReference>
<dbReference type="SUPFAM" id="SSF118116">
    <property type="entry name" value="DNA mismatch repair protein MutL"/>
    <property type="match status" value="1"/>
</dbReference>
<dbReference type="SUPFAM" id="SSF54211">
    <property type="entry name" value="Ribosomal protein S5 domain 2-like"/>
    <property type="match status" value="1"/>
</dbReference>
<dbReference type="PROSITE" id="PS00058">
    <property type="entry name" value="DNA_MISMATCH_REPAIR_1"/>
    <property type="match status" value="1"/>
</dbReference>
<comment type="function">
    <text evidence="1">This protein is involved in the repair of mismatches in DNA. It is required for dam-dependent methyl-directed DNA mismatch repair. May act as a 'molecular matchmaker', a protein that promotes the formation of a stable complex between two or more DNA-binding proteins in an ATP-dependent manner without itself being part of a final effector complex.</text>
</comment>
<comment type="similarity">
    <text evidence="1">Belongs to the DNA mismatch repair MutL/HexB family.</text>
</comment>
<evidence type="ECO:0000255" key="1">
    <source>
        <dbReference type="HAMAP-Rule" id="MF_00149"/>
    </source>
</evidence>
<accession>C1A8L2</accession>
<proteinExistence type="inferred from homology"/>
<protein>
    <recommendedName>
        <fullName evidence="1">DNA mismatch repair protein MutL</fullName>
    </recommendedName>
</protein>
<keyword id="KW-0227">DNA damage</keyword>
<keyword id="KW-0234">DNA repair</keyword>
<keyword id="KW-1185">Reference proteome</keyword>
<feature type="chain" id="PRO_1000203388" description="DNA mismatch repair protein MutL">
    <location>
        <begin position="1"/>
        <end position="607"/>
    </location>
</feature>